<protein>
    <recommendedName>
        <fullName evidence="1">Cytochrome b6-f complex subunit 6</fullName>
    </recommendedName>
    <alternativeName>
        <fullName evidence="1">Cytochrome b6-f complex subunit PetL</fullName>
    </alternativeName>
    <alternativeName>
        <fullName evidence="1">Cytochrome b6-f complex subunit VI</fullName>
    </alternativeName>
</protein>
<organism>
    <name type="scientific">Pinus mugo</name>
    <name type="common">Dwarf mountain pine</name>
    <dbReference type="NCBI Taxonomy" id="28528"/>
    <lineage>
        <taxon>Eukaryota</taxon>
        <taxon>Viridiplantae</taxon>
        <taxon>Streptophyta</taxon>
        <taxon>Embryophyta</taxon>
        <taxon>Tracheophyta</taxon>
        <taxon>Spermatophyta</taxon>
        <taxon>Pinopsida</taxon>
        <taxon>Pinidae</taxon>
        <taxon>Conifers I</taxon>
        <taxon>Pinales</taxon>
        <taxon>Pinaceae</taxon>
        <taxon>Pinus</taxon>
        <taxon>Pinus subgen. Pinus</taxon>
    </lineage>
</organism>
<proteinExistence type="evidence at transcript level"/>
<dbReference type="EMBL" id="AJ704411">
    <property type="protein sequence ID" value="CAG28623.1"/>
    <property type="molecule type" value="Genomic_DNA"/>
</dbReference>
<dbReference type="SMR" id="Q5K3V3"/>
<dbReference type="GO" id="GO:0009535">
    <property type="term" value="C:chloroplast thylakoid membrane"/>
    <property type="evidence" value="ECO:0007669"/>
    <property type="project" value="UniProtKB-SubCell"/>
</dbReference>
<dbReference type="GO" id="GO:0009512">
    <property type="term" value="C:cytochrome b6f complex"/>
    <property type="evidence" value="ECO:0007669"/>
    <property type="project" value="InterPro"/>
</dbReference>
<dbReference type="GO" id="GO:0045158">
    <property type="term" value="F:electron transporter, transferring electrons within cytochrome b6/f complex of photosystem II activity"/>
    <property type="evidence" value="ECO:0007669"/>
    <property type="project" value="UniProtKB-UniRule"/>
</dbReference>
<dbReference type="GO" id="GO:0015979">
    <property type="term" value="P:photosynthesis"/>
    <property type="evidence" value="ECO:0007669"/>
    <property type="project" value="UniProtKB-KW"/>
</dbReference>
<dbReference type="HAMAP" id="MF_00433">
    <property type="entry name" value="Cytb6_f_PetL"/>
    <property type="match status" value="1"/>
</dbReference>
<dbReference type="InterPro" id="IPR007802">
    <property type="entry name" value="Cyt_b6/f_cplx_su6"/>
</dbReference>
<dbReference type="Pfam" id="PF05115">
    <property type="entry name" value="PetL"/>
    <property type="match status" value="1"/>
</dbReference>
<keyword id="KW-0150">Chloroplast</keyword>
<keyword id="KW-0249">Electron transport</keyword>
<keyword id="KW-0472">Membrane</keyword>
<keyword id="KW-0602">Photosynthesis</keyword>
<keyword id="KW-0934">Plastid</keyword>
<keyword id="KW-0691">RNA editing</keyword>
<keyword id="KW-0793">Thylakoid</keyword>
<keyword id="KW-0812">Transmembrane</keyword>
<keyword id="KW-1133">Transmembrane helix</keyword>
<keyword id="KW-0813">Transport</keyword>
<geneLocation type="chloroplast"/>
<accession>Q5K3V3</accession>
<comment type="function">
    <text evidence="1">Component of the cytochrome b6-f complex, which mediates electron transfer between photosystem II (PSII) and photosystem I (PSI), cyclic electron flow around PSI, and state transitions. PetL is important for photoautotrophic growth as well as for electron transfer efficiency and stability of the cytochrome b6-f complex.</text>
</comment>
<comment type="subunit">
    <text evidence="1">The 4 large subunits of the cytochrome b6-f complex are cytochrome b6, subunit IV (17 kDa polypeptide, PetD), cytochrome f and the Rieske protein, while the 4 small subunits are PetG, PetL, PetM and PetN. The complex functions as a dimer.</text>
</comment>
<comment type="subcellular location">
    <subcellularLocation>
        <location evidence="1">Plastid</location>
        <location evidence="1">Chloroplast thylakoid membrane</location>
        <topology evidence="1">Single-pass membrane protein</topology>
    </subcellularLocation>
</comment>
<comment type="RNA editing">
    <location>
        <position position="1" evidence="2"/>
    </location>
    <location>
        <position position="27" evidence="2"/>
    </location>
    <location>
        <position position="33" evidence="2"/>
    </location>
    <text>The initiator methionine is created by RNA editing. The stop codon at position 33 is created by RNA editing.</text>
</comment>
<comment type="similarity">
    <text evidence="1">Belongs to the PetL family.</text>
</comment>
<feature type="chain" id="PRO_0000233683" description="Cytochrome b6-f complex subunit 6">
    <location>
        <begin position="1"/>
        <end position="33"/>
    </location>
</feature>
<feature type="transmembrane region" description="Helical" evidence="1">
    <location>
        <begin position="4"/>
        <end position="24"/>
    </location>
</feature>
<name>PETL_PINMU</name>
<sequence>MPTITIISYFGLLLASIIFTLVLFISLSKIQLI</sequence>
<reference key="1">
    <citation type="journal article" date="2004" name="Nucleic Acids Res.">
        <title>Rapid evolution of RNA editing sites in a small non-essential plastid gene.</title>
        <authorList>
            <person name="Fiebig A."/>
            <person name="Stegemann S."/>
            <person name="Bock R."/>
        </authorList>
    </citation>
    <scope>NUCLEOTIDE SEQUENCE [GENOMIC DNA]</scope>
    <scope>RNA EDITING</scope>
    <source>
        <tissue>Leaf</tissue>
    </source>
</reference>
<evidence type="ECO:0000255" key="1">
    <source>
        <dbReference type="HAMAP-Rule" id="MF_00433"/>
    </source>
</evidence>
<evidence type="ECO:0000269" key="2">
    <source>
    </source>
</evidence>
<gene>
    <name evidence="1" type="primary">petL</name>
</gene>